<sequence length="212" mass="24078">MTDEKVINKKLVGDNKLFRHQAKFVAGAMDIKQLPNFALPQIAFVGKSNVGKSSLINTICNNKKLAKVSNTPGRTRQINFFNLVDKLIIVDLPGYGFAQVPNQVKDQWEILINHYLRKSDNLKLVNLLIDSRRGIKENDKKVAELLLANKRDFQIIFTKSDKVTDRKNLNLEAQNFLATLNYSCNLIYVSSRSKEGARELKTSLAKCIKLEK</sequence>
<comment type="function">
    <text evidence="1">Necessary for normal cell division and for the maintenance of normal septation.</text>
</comment>
<comment type="cofactor">
    <cofactor evidence="1">
        <name>Mg(2+)</name>
        <dbReference type="ChEBI" id="CHEBI:18420"/>
    </cofactor>
</comment>
<comment type="similarity">
    <text evidence="1">Belongs to the TRAFAC class TrmE-Era-EngA-EngB-Septin-like GTPase superfamily. EngB GTPase family.</text>
</comment>
<feature type="chain" id="PRO_0000266935" description="Probable GTP-binding protein EngB">
    <location>
        <begin position="1"/>
        <end position="212"/>
    </location>
</feature>
<feature type="domain" description="EngB-type G" evidence="1">
    <location>
        <begin position="38"/>
        <end position="210"/>
    </location>
</feature>
<feature type="binding site" evidence="1">
    <location>
        <begin position="46"/>
        <end position="53"/>
    </location>
    <ligand>
        <name>GTP</name>
        <dbReference type="ChEBI" id="CHEBI:37565"/>
    </ligand>
</feature>
<feature type="binding site" evidence="1">
    <location>
        <position position="53"/>
    </location>
    <ligand>
        <name>Mg(2+)</name>
        <dbReference type="ChEBI" id="CHEBI:18420"/>
    </ligand>
</feature>
<feature type="binding site" evidence="1">
    <location>
        <begin position="73"/>
        <end position="77"/>
    </location>
    <ligand>
        <name>GTP</name>
        <dbReference type="ChEBI" id="CHEBI:37565"/>
    </ligand>
</feature>
<feature type="binding site" evidence="1">
    <location>
        <position position="75"/>
    </location>
    <ligand>
        <name>Mg(2+)</name>
        <dbReference type="ChEBI" id="CHEBI:18420"/>
    </ligand>
</feature>
<feature type="binding site" evidence="1">
    <location>
        <begin position="91"/>
        <end position="94"/>
    </location>
    <ligand>
        <name>GTP</name>
        <dbReference type="ChEBI" id="CHEBI:37565"/>
    </ligand>
</feature>
<feature type="binding site" evidence="1">
    <location>
        <begin position="158"/>
        <end position="161"/>
    </location>
    <ligand>
        <name>GTP</name>
        <dbReference type="ChEBI" id="CHEBI:37565"/>
    </ligand>
</feature>
<feature type="binding site" evidence="1">
    <location>
        <begin position="189"/>
        <end position="191"/>
    </location>
    <ligand>
        <name>GTP</name>
        <dbReference type="ChEBI" id="CHEBI:37565"/>
    </ligand>
</feature>
<protein>
    <recommendedName>
        <fullName evidence="1">Probable GTP-binding protein EngB</fullName>
    </recommendedName>
</protein>
<organism>
    <name type="scientific">Rickettsia bellii (strain RML369-C)</name>
    <dbReference type="NCBI Taxonomy" id="336407"/>
    <lineage>
        <taxon>Bacteria</taxon>
        <taxon>Pseudomonadati</taxon>
        <taxon>Pseudomonadota</taxon>
        <taxon>Alphaproteobacteria</taxon>
        <taxon>Rickettsiales</taxon>
        <taxon>Rickettsiaceae</taxon>
        <taxon>Rickettsieae</taxon>
        <taxon>Rickettsia</taxon>
        <taxon>belli group</taxon>
    </lineage>
</organism>
<evidence type="ECO:0000255" key="1">
    <source>
        <dbReference type="HAMAP-Rule" id="MF_00321"/>
    </source>
</evidence>
<proteinExistence type="inferred from homology"/>
<reference key="1">
    <citation type="journal article" date="2006" name="PLoS Genet.">
        <title>Genome sequence of Rickettsia bellii illuminates the role of amoebae in gene exchanges between intracellular pathogens.</title>
        <authorList>
            <person name="Ogata H."/>
            <person name="La Scola B."/>
            <person name="Audic S."/>
            <person name="Renesto P."/>
            <person name="Blanc G."/>
            <person name="Robert C."/>
            <person name="Fournier P.-E."/>
            <person name="Claverie J.-M."/>
            <person name="Raoult D."/>
        </authorList>
    </citation>
    <scope>NUCLEOTIDE SEQUENCE [LARGE SCALE GENOMIC DNA]</scope>
    <source>
        <strain>RML369-C</strain>
    </source>
</reference>
<keyword id="KW-0131">Cell cycle</keyword>
<keyword id="KW-0132">Cell division</keyword>
<keyword id="KW-0342">GTP-binding</keyword>
<keyword id="KW-0460">Magnesium</keyword>
<keyword id="KW-0479">Metal-binding</keyword>
<keyword id="KW-0547">Nucleotide-binding</keyword>
<keyword id="KW-0717">Septation</keyword>
<gene>
    <name evidence="1" type="primary">engB</name>
    <name type="ordered locus">RBE_1277</name>
</gene>
<accession>Q1RH06</accession>
<dbReference type="EMBL" id="CP000087">
    <property type="protein sequence ID" value="ABE05358.1"/>
    <property type="molecule type" value="Genomic_DNA"/>
</dbReference>
<dbReference type="SMR" id="Q1RH06"/>
<dbReference type="KEGG" id="rbe:RBE_1277"/>
<dbReference type="eggNOG" id="COG0218">
    <property type="taxonomic scope" value="Bacteria"/>
</dbReference>
<dbReference type="HOGENOM" id="CLU_033732_2_0_5"/>
<dbReference type="OrthoDB" id="9804921at2"/>
<dbReference type="Proteomes" id="UP000001951">
    <property type="component" value="Chromosome"/>
</dbReference>
<dbReference type="GO" id="GO:0005525">
    <property type="term" value="F:GTP binding"/>
    <property type="evidence" value="ECO:0007669"/>
    <property type="project" value="UniProtKB-UniRule"/>
</dbReference>
<dbReference type="GO" id="GO:0046872">
    <property type="term" value="F:metal ion binding"/>
    <property type="evidence" value="ECO:0007669"/>
    <property type="project" value="UniProtKB-KW"/>
</dbReference>
<dbReference type="GO" id="GO:0000917">
    <property type="term" value="P:division septum assembly"/>
    <property type="evidence" value="ECO:0007669"/>
    <property type="project" value="UniProtKB-KW"/>
</dbReference>
<dbReference type="CDD" id="cd01876">
    <property type="entry name" value="YihA_EngB"/>
    <property type="match status" value="1"/>
</dbReference>
<dbReference type="Gene3D" id="3.40.50.300">
    <property type="entry name" value="P-loop containing nucleotide triphosphate hydrolases"/>
    <property type="match status" value="1"/>
</dbReference>
<dbReference type="HAMAP" id="MF_00321">
    <property type="entry name" value="GTPase_EngB"/>
    <property type="match status" value="1"/>
</dbReference>
<dbReference type="InterPro" id="IPR030393">
    <property type="entry name" value="G_ENGB_dom"/>
</dbReference>
<dbReference type="InterPro" id="IPR006073">
    <property type="entry name" value="GTP-bd"/>
</dbReference>
<dbReference type="InterPro" id="IPR019987">
    <property type="entry name" value="GTP-bd_ribosome_bio_YsxC"/>
</dbReference>
<dbReference type="InterPro" id="IPR027417">
    <property type="entry name" value="P-loop_NTPase"/>
</dbReference>
<dbReference type="NCBIfam" id="TIGR03598">
    <property type="entry name" value="GTPase_YsxC"/>
    <property type="match status" value="1"/>
</dbReference>
<dbReference type="PANTHER" id="PTHR11649:SF13">
    <property type="entry name" value="ENGB-TYPE G DOMAIN-CONTAINING PROTEIN"/>
    <property type="match status" value="1"/>
</dbReference>
<dbReference type="PANTHER" id="PTHR11649">
    <property type="entry name" value="MSS1/TRME-RELATED GTP-BINDING PROTEIN"/>
    <property type="match status" value="1"/>
</dbReference>
<dbReference type="Pfam" id="PF01926">
    <property type="entry name" value="MMR_HSR1"/>
    <property type="match status" value="1"/>
</dbReference>
<dbReference type="SUPFAM" id="SSF52540">
    <property type="entry name" value="P-loop containing nucleoside triphosphate hydrolases"/>
    <property type="match status" value="1"/>
</dbReference>
<dbReference type="PROSITE" id="PS51706">
    <property type="entry name" value="G_ENGB"/>
    <property type="match status" value="1"/>
</dbReference>
<name>ENGB_RICBR</name>